<name>LDHA_PANTR</name>
<dbReference type="EC" id="1.1.1.27" evidence="2"/>
<dbReference type="EMBL" id="AB188278">
    <property type="protein sequence ID" value="BAD74029.1"/>
    <property type="molecule type" value="mRNA"/>
</dbReference>
<dbReference type="EMBL" id="AB222143">
    <property type="protein sequence ID" value="BAF62388.1"/>
    <property type="molecule type" value="mRNA"/>
</dbReference>
<dbReference type="RefSeq" id="NP_001029268.1">
    <property type="nucleotide sequence ID" value="NM_001034096.1"/>
</dbReference>
<dbReference type="SMR" id="Q5R1W9"/>
<dbReference type="FunCoup" id="Q5R1W9">
    <property type="interactions" value="1328"/>
</dbReference>
<dbReference type="IntAct" id="Q5R1W9">
    <property type="interactions" value="1"/>
</dbReference>
<dbReference type="MINT" id="Q5R1W9"/>
<dbReference type="STRING" id="9598.ENSPTRP00000080362"/>
<dbReference type="PaxDb" id="9598-ENSPTRP00000005957"/>
<dbReference type="Ensembl" id="ENSPTRT00000006460.5">
    <property type="protein sequence ID" value="ENSPTRP00000005957.4"/>
    <property type="gene ID" value="ENSPTRG00000003421.5"/>
</dbReference>
<dbReference type="GeneID" id="451063"/>
<dbReference type="KEGG" id="ptr:451063"/>
<dbReference type="CTD" id="3939"/>
<dbReference type="VGNC" id="VGNC:1085">
    <property type="gene designation" value="LDHA"/>
</dbReference>
<dbReference type="eggNOG" id="KOG1495">
    <property type="taxonomic scope" value="Eukaryota"/>
</dbReference>
<dbReference type="GeneTree" id="ENSGT00940000153201"/>
<dbReference type="HOGENOM" id="CLU_045401_0_2_1"/>
<dbReference type="InParanoid" id="Q5R1W9"/>
<dbReference type="TreeFam" id="TF314963"/>
<dbReference type="UniPathway" id="UPA00554">
    <property type="reaction ID" value="UER00611"/>
</dbReference>
<dbReference type="Proteomes" id="UP000002277">
    <property type="component" value="Chromosome 11"/>
</dbReference>
<dbReference type="Bgee" id="ENSPTRG00000003421">
    <property type="expression patterns" value="Expressed in fibroblast and 21 other cell types or tissues"/>
</dbReference>
<dbReference type="GO" id="GO:0005739">
    <property type="term" value="C:mitochondrion"/>
    <property type="evidence" value="ECO:0000318"/>
    <property type="project" value="GO_Central"/>
</dbReference>
<dbReference type="GO" id="GO:0004459">
    <property type="term" value="F:L-lactate dehydrogenase activity"/>
    <property type="evidence" value="ECO:0000318"/>
    <property type="project" value="GO_Central"/>
</dbReference>
<dbReference type="GO" id="GO:0006089">
    <property type="term" value="P:lactate metabolic process"/>
    <property type="evidence" value="ECO:0000318"/>
    <property type="project" value="GO_Central"/>
</dbReference>
<dbReference type="GO" id="GO:0006090">
    <property type="term" value="P:pyruvate metabolic process"/>
    <property type="evidence" value="ECO:0000318"/>
    <property type="project" value="GO_Central"/>
</dbReference>
<dbReference type="CDD" id="cd05293">
    <property type="entry name" value="LDH_1"/>
    <property type="match status" value="1"/>
</dbReference>
<dbReference type="FunFam" id="3.40.50.720:FF:000029">
    <property type="entry name" value="L-lactate dehydrogenase A chain"/>
    <property type="match status" value="1"/>
</dbReference>
<dbReference type="FunFam" id="3.90.110.10:FF:000003">
    <property type="entry name" value="L-lactate dehydrogenase A chain"/>
    <property type="match status" value="1"/>
</dbReference>
<dbReference type="Gene3D" id="3.90.110.10">
    <property type="entry name" value="Lactate dehydrogenase/glycoside hydrolase, family 4, C-terminal"/>
    <property type="match status" value="1"/>
</dbReference>
<dbReference type="Gene3D" id="3.40.50.720">
    <property type="entry name" value="NAD(P)-binding Rossmann-like Domain"/>
    <property type="match status" value="1"/>
</dbReference>
<dbReference type="HAMAP" id="MF_00488">
    <property type="entry name" value="Lactate_dehydrog"/>
    <property type="match status" value="1"/>
</dbReference>
<dbReference type="InterPro" id="IPR001557">
    <property type="entry name" value="L-lactate/malate_DH"/>
</dbReference>
<dbReference type="InterPro" id="IPR011304">
    <property type="entry name" value="L-lactate_DH"/>
</dbReference>
<dbReference type="InterPro" id="IPR018177">
    <property type="entry name" value="L-lactate_DH_AS"/>
</dbReference>
<dbReference type="InterPro" id="IPR022383">
    <property type="entry name" value="Lactate/malate_DH_C"/>
</dbReference>
<dbReference type="InterPro" id="IPR001236">
    <property type="entry name" value="Lactate/malate_DH_N"/>
</dbReference>
<dbReference type="InterPro" id="IPR015955">
    <property type="entry name" value="Lactate_DH/Glyco_Ohase_4_C"/>
</dbReference>
<dbReference type="InterPro" id="IPR036291">
    <property type="entry name" value="NAD(P)-bd_dom_sf"/>
</dbReference>
<dbReference type="NCBIfam" id="TIGR01771">
    <property type="entry name" value="L-LDH-NAD"/>
    <property type="match status" value="1"/>
</dbReference>
<dbReference type="NCBIfam" id="NF000824">
    <property type="entry name" value="PRK00066.1"/>
    <property type="match status" value="1"/>
</dbReference>
<dbReference type="PANTHER" id="PTHR43128">
    <property type="entry name" value="L-2-HYDROXYCARBOXYLATE DEHYDROGENASE (NAD(P)(+))"/>
    <property type="match status" value="1"/>
</dbReference>
<dbReference type="PANTHER" id="PTHR43128:SF10">
    <property type="entry name" value="L-LACTATE DEHYDROGENASE A CHAIN"/>
    <property type="match status" value="1"/>
</dbReference>
<dbReference type="Pfam" id="PF02866">
    <property type="entry name" value="Ldh_1_C"/>
    <property type="match status" value="1"/>
</dbReference>
<dbReference type="Pfam" id="PF00056">
    <property type="entry name" value="Ldh_1_N"/>
    <property type="match status" value="1"/>
</dbReference>
<dbReference type="PIRSF" id="PIRSF000102">
    <property type="entry name" value="Lac_mal_DH"/>
    <property type="match status" value="1"/>
</dbReference>
<dbReference type="PRINTS" id="PR00086">
    <property type="entry name" value="LLDHDRGNASE"/>
</dbReference>
<dbReference type="SUPFAM" id="SSF56327">
    <property type="entry name" value="LDH C-terminal domain-like"/>
    <property type="match status" value="1"/>
</dbReference>
<dbReference type="SUPFAM" id="SSF51735">
    <property type="entry name" value="NAD(P)-binding Rossmann-fold domains"/>
    <property type="match status" value="1"/>
</dbReference>
<dbReference type="PROSITE" id="PS00064">
    <property type="entry name" value="L_LDH"/>
    <property type="match status" value="1"/>
</dbReference>
<organism>
    <name type="scientific">Pan troglodytes</name>
    <name type="common">Chimpanzee</name>
    <dbReference type="NCBI Taxonomy" id="9598"/>
    <lineage>
        <taxon>Eukaryota</taxon>
        <taxon>Metazoa</taxon>
        <taxon>Chordata</taxon>
        <taxon>Craniata</taxon>
        <taxon>Vertebrata</taxon>
        <taxon>Euteleostomi</taxon>
        <taxon>Mammalia</taxon>
        <taxon>Eutheria</taxon>
        <taxon>Euarchontoglires</taxon>
        <taxon>Primates</taxon>
        <taxon>Haplorrhini</taxon>
        <taxon>Catarrhini</taxon>
        <taxon>Hominidae</taxon>
        <taxon>Pan</taxon>
    </lineage>
</organism>
<gene>
    <name type="primary">LDHA</name>
</gene>
<keyword id="KW-0007">Acetylation</keyword>
<keyword id="KW-0963">Cytoplasm</keyword>
<keyword id="KW-1017">Isopeptide bond</keyword>
<keyword id="KW-0520">NAD</keyword>
<keyword id="KW-0560">Oxidoreductase</keyword>
<keyword id="KW-0597">Phosphoprotein</keyword>
<keyword id="KW-1185">Reference proteome</keyword>
<keyword id="KW-0832">Ubl conjugation</keyword>
<comment type="function">
    <text evidence="2">Interconverts simultaneously and stereospecifically pyruvate and lactate with concomitant interconversion of NADH and NAD(+).</text>
</comment>
<comment type="catalytic activity">
    <reaction evidence="2">
        <text>(S)-lactate + NAD(+) = pyruvate + NADH + H(+)</text>
        <dbReference type="Rhea" id="RHEA:23444"/>
        <dbReference type="ChEBI" id="CHEBI:15361"/>
        <dbReference type="ChEBI" id="CHEBI:15378"/>
        <dbReference type="ChEBI" id="CHEBI:16651"/>
        <dbReference type="ChEBI" id="CHEBI:57540"/>
        <dbReference type="ChEBI" id="CHEBI:57945"/>
        <dbReference type="EC" id="1.1.1.27"/>
    </reaction>
    <physiologicalReaction direction="left-to-right" evidence="2">
        <dbReference type="Rhea" id="RHEA:23445"/>
    </physiologicalReaction>
    <physiologicalReaction direction="right-to-left" evidence="2">
        <dbReference type="Rhea" id="RHEA:23446"/>
    </physiologicalReaction>
</comment>
<comment type="pathway">
    <text evidence="2">Fermentation; pyruvate fermentation to lactate; (S)-lactate from pyruvate: step 1/1.</text>
</comment>
<comment type="subunit">
    <text evidence="2">Homotetramer. Interacts with PTEN upstream reading frame protein MP31.</text>
</comment>
<comment type="subcellular location">
    <subcellularLocation>
        <location evidence="1">Cytoplasm</location>
    </subcellularLocation>
</comment>
<comment type="PTM">
    <text evidence="2">ISGylated.</text>
</comment>
<comment type="similarity">
    <text evidence="5">Belongs to the LDH/MDH superfamily. LDH family.</text>
</comment>
<feature type="initiator methionine" description="Removed" evidence="2">
    <location>
        <position position="1"/>
    </location>
</feature>
<feature type="chain" id="PRO_0000168415" description="L-lactate dehydrogenase A chain">
    <location>
        <begin position="2"/>
        <end position="332"/>
    </location>
</feature>
<feature type="active site" description="Proton acceptor" evidence="1">
    <location>
        <position position="193"/>
    </location>
</feature>
<feature type="binding site" evidence="1">
    <location>
        <begin position="29"/>
        <end position="57"/>
    </location>
    <ligand>
        <name>NAD(+)</name>
        <dbReference type="ChEBI" id="CHEBI:57540"/>
    </ligand>
</feature>
<feature type="binding site" evidence="1">
    <location>
        <position position="99"/>
    </location>
    <ligand>
        <name>NAD(+)</name>
        <dbReference type="ChEBI" id="CHEBI:57540"/>
    </ligand>
</feature>
<feature type="binding site" evidence="1">
    <location>
        <position position="106"/>
    </location>
    <ligand>
        <name>substrate</name>
    </ligand>
</feature>
<feature type="binding site" evidence="1">
    <location>
        <position position="138"/>
    </location>
    <ligand>
        <name>substrate</name>
    </ligand>
</feature>
<feature type="binding site" evidence="1">
    <location>
        <position position="169"/>
    </location>
    <ligand>
        <name>substrate</name>
    </ligand>
</feature>
<feature type="binding site" evidence="1">
    <location>
        <position position="248"/>
    </location>
    <ligand>
        <name>substrate</name>
    </ligand>
</feature>
<feature type="modified residue" description="N-acetylalanine" evidence="2">
    <location>
        <position position="2"/>
    </location>
</feature>
<feature type="modified residue" description="N6-acetyllysine; alternate" evidence="2">
    <location>
        <position position="5"/>
    </location>
</feature>
<feature type="modified residue" description="N6-succinyllysine; alternate" evidence="4">
    <location>
        <position position="5"/>
    </location>
</feature>
<feature type="modified residue" description="N6-acetyllysine" evidence="2">
    <location>
        <position position="14"/>
    </location>
</feature>
<feature type="modified residue" description="Phosphothreonine" evidence="2">
    <location>
        <position position="18"/>
    </location>
</feature>
<feature type="modified residue" description="N6-acetyllysine; alternate" evidence="2">
    <location>
        <position position="57"/>
    </location>
</feature>
<feature type="modified residue" description="N6-acetyllysine" evidence="2">
    <location>
        <position position="81"/>
    </location>
</feature>
<feature type="modified residue" description="N6-acetyllysine; alternate" evidence="2">
    <location>
        <position position="118"/>
    </location>
</feature>
<feature type="modified residue" description="N6-succinyllysine; alternate" evidence="4">
    <location>
        <position position="118"/>
    </location>
</feature>
<feature type="modified residue" description="N6-acetyllysine" evidence="2">
    <location>
        <position position="126"/>
    </location>
</feature>
<feature type="modified residue" description="N6-acetyllysine" evidence="4">
    <location>
        <position position="224"/>
    </location>
</feature>
<feature type="modified residue" description="N6-acetyllysine" evidence="4">
    <location>
        <position position="232"/>
    </location>
</feature>
<feature type="modified residue" description="Phosphotyrosine" evidence="4">
    <location>
        <position position="239"/>
    </location>
</feature>
<feature type="modified residue" description="N6-acetyllysine" evidence="4">
    <location>
        <position position="243"/>
    </location>
</feature>
<feature type="modified residue" description="Phosphothreonine" evidence="3">
    <location>
        <position position="309"/>
    </location>
</feature>
<feature type="modified residue" description="Phosphoserine" evidence="2">
    <location>
        <position position="310"/>
    </location>
</feature>
<feature type="modified residue" description="N6-acetyllysine; alternate" evidence="2">
    <location>
        <position position="318"/>
    </location>
</feature>
<feature type="modified residue" description="N6-succinyllysine; alternate" evidence="4">
    <location>
        <position position="318"/>
    </location>
</feature>
<feature type="modified residue" description="Phosphothreonine" evidence="3">
    <location>
        <position position="322"/>
    </location>
</feature>
<feature type="cross-link" description="Glycyl lysine isopeptide (Lys-Gly) (interchain with G-Cter in SUMO2); alternate" evidence="2">
    <location>
        <position position="57"/>
    </location>
</feature>
<accession>Q5R1W9</accession>
<accession>A5A6L5</accession>
<sequence>MATLKDQLIHNLLKEEQTPQNKITVVGVGAVGMACAISILMKDLADELALVDVIEDKLKGEMMDLQHGSLFLRTPKIVSGKDYNVTANSKLVIITAGARQQEGESRLNLVQRNVNIFKFIIPNVVKYSPNCKLLIVSNPVDILTYVAWKISGFPKNRVIGSGCNLDSARFRYLMGERLGVHPLSCHGWVLGEHGDSSVPVWSGMNVAGVSLKTLHPDLGTDKDKEQWKEVHKQVVESAYEVIKLKGYTSWAIGLSVADLAESIMKNLRRVHPVSTMIKGLYGIKDDVFLSVPCILGQNGISDLVKVTLTSEEEARLKKSADTLWGIQKELQF</sequence>
<proteinExistence type="evidence at transcript level"/>
<reference key="1">
    <citation type="submission" date="2004-08" db="EMBL/GenBank/DDBJ databases">
        <authorList>
            <person name="Hirai M."/>
            <person name="Sakate R."/>
            <person name="Hida M."/>
            <person name="Sugano S."/>
            <person name="Hayasaka I."/>
            <person name="Suto Y."/>
            <person name="Osada N."/>
            <person name="Hashimoto K."/>
        </authorList>
    </citation>
    <scope>NUCLEOTIDE SEQUENCE [MRNA]</scope>
    <source>
        <tissue>Skin</tissue>
    </source>
</reference>
<reference key="2">
    <citation type="journal article" date="2007" name="Gene">
        <title>Mapping of chimpanzee full-length cDNAs onto the human genome unveils large potential divergence of the transcriptome.</title>
        <authorList>
            <person name="Sakate R."/>
            <person name="Suto Y."/>
            <person name="Imanishi T."/>
            <person name="Tanoue T."/>
            <person name="Hida M."/>
            <person name="Hayasaka I."/>
            <person name="Kusuda J."/>
            <person name="Gojobori T."/>
            <person name="Hashimoto K."/>
            <person name="Hirai M."/>
        </authorList>
    </citation>
    <scope>NUCLEOTIDE SEQUENCE [MRNA]</scope>
    <source>
        <tissue>Brain</tissue>
    </source>
</reference>
<evidence type="ECO:0000250" key="1"/>
<evidence type="ECO:0000250" key="2">
    <source>
        <dbReference type="UniProtKB" id="P00338"/>
    </source>
</evidence>
<evidence type="ECO:0000250" key="3">
    <source>
        <dbReference type="UniProtKB" id="P04642"/>
    </source>
</evidence>
<evidence type="ECO:0000250" key="4">
    <source>
        <dbReference type="UniProtKB" id="P06151"/>
    </source>
</evidence>
<evidence type="ECO:0000305" key="5"/>
<protein>
    <recommendedName>
        <fullName>L-lactate dehydrogenase A chain</fullName>
        <shortName>LDH-A</shortName>
        <ecNumber evidence="2">1.1.1.27</ecNumber>
    </recommendedName>
    <alternativeName>
        <fullName>LDH muscle subunit</fullName>
        <shortName>LDH-M</shortName>
    </alternativeName>
</protein>